<accession>Q6CFU2</accession>
<evidence type="ECO:0000250" key="1"/>
<evidence type="ECO:0000255" key="2"/>
<evidence type="ECO:0000256" key="3">
    <source>
        <dbReference type="SAM" id="MobiDB-lite"/>
    </source>
</evidence>
<evidence type="ECO:0000305" key="4"/>
<protein>
    <recommendedName>
        <fullName>rRNA biogenesis protein RRP36</fullName>
    </recommendedName>
    <alternativeName>
        <fullName>Ribosomal RNA-processing protein 36</fullName>
    </alternativeName>
</protein>
<sequence length="280" mass="32367">MKRDSNRNLVRKRADDSDSDDYNTFAGLEKDSGPEEMSSLSFGAIRNAQKNLDKENEDDSDSDSDSGPEENSGGYERSSYKGNNKGKGNNKEDGGPKKRLKHAPSEASSKKRVSVIRPIPGLTMTKSGADSASRDSKLYRDIRFDATYGKANEDRVREDYAFLDEYRREEIAELQAKLKKTEESYIRSQIQTQIQSLQSKLKTLEKRDFRKKVLNEHRQQQREQAKDGKNPYYLKRSDQRKLVLTEQFKTMKKKDIDRAIERRRKKITGKEKKDMFSGRD</sequence>
<dbReference type="EMBL" id="CR382128">
    <property type="protein sequence ID" value="CAG82696.1"/>
    <property type="molecule type" value="Genomic_DNA"/>
</dbReference>
<dbReference type="RefSeq" id="XP_500470.1">
    <property type="nucleotide sequence ID" value="XM_500470.1"/>
</dbReference>
<dbReference type="SMR" id="Q6CFU2"/>
<dbReference type="FunCoup" id="Q6CFU2">
    <property type="interactions" value="567"/>
</dbReference>
<dbReference type="STRING" id="284591.Q6CFU2"/>
<dbReference type="EnsemblFungi" id="CAG82696">
    <property type="protein sequence ID" value="CAG82696"/>
    <property type="gene ID" value="YALI0_B03784g"/>
</dbReference>
<dbReference type="KEGG" id="yli:2907010"/>
<dbReference type="VEuPathDB" id="FungiDB:YALI0_B03784g"/>
<dbReference type="HOGENOM" id="CLU_048802_3_0_1"/>
<dbReference type="InParanoid" id="Q6CFU2"/>
<dbReference type="OMA" id="QHEIGSE"/>
<dbReference type="OrthoDB" id="120802at4891"/>
<dbReference type="Proteomes" id="UP000001300">
    <property type="component" value="Chromosome B"/>
</dbReference>
<dbReference type="GO" id="GO:0030686">
    <property type="term" value="C:90S preribosome"/>
    <property type="evidence" value="ECO:0000318"/>
    <property type="project" value="GO_Central"/>
</dbReference>
<dbReference type="GO" id="GO:0005730">
    <property type="term" value="C:nucleolus"/>
    <property type="evidence" value="ECO:0000318"/>
    <property type="project" value="GO_Central"/>
</dbReference>
<dbReference type="GO" id="GO:0032040">
    <property type="term" value="C:small-subunit processome"/>
    <property type="evidence" value="ECO:0007669"/>
    <property type="project" value="EnsemblFungi"/>
</dbReference>
<dbReference type="GO" id="GO:0000462">
    <property type="term" value="P:maturation of SSU-rRNA from tricistronic rRNA transcript (SSU-rRNA, 5.8S rRNA, LSU-rRNA)"/>
    <property type="evidence" value="ECO:0000318"/>
    <property type="project" value="GO_Central"/>
</dbReference>
<dbReference type="InterPro" id="IPR009292">
    <property type="entry name" value="RRP36"/>
</dbReference>
<dbReference type="PANTHER" id="PTHR21738">
    <property type="entry name" value="RIBOSOMAL RNA PROCESSING PROTEIN 36 HOMOLOG"/>
    <property type="match status" value="1"/>
</dbReference>
<dbReference type="PANTHER" id="PTHR21738:SF0">
    <property type="entry name" value="RIBOSOMAL RNA PROCESSING PROTEIN 36 HOMOLOG"/>
    <property type="match status" value="1"/>
</dbReference>
<dbReference type="Pfam" id="PF06102">
    <property type="entry name" value="RRP36"/>
    <property type="match status" value="1"/>
</dbReference>
<proteinExistence type="inferred from homology"/>
<gene>
    <name type="primary">RRP36</name>
    <name type="ordered locus">YALI0B03784g</name>
</gene>
<organism>
    <name type="scientific">Yarrowia lipolytica (strain CLIB 122 / E 150)</name>
    <name type="common">Yeast</name>
    <name type="synonym">Candida lipolytica</name>
    <dbReference type="NCBI Taxonomy" id="284591"/>
    <lineage>
        <taxon>Eukaryota</taxon>
        <taxon>Fungi</taxon>
        <taxon>Dikarya</taxon>
        <taxon>Ascomycota</taxon>
        <taxon>Saccharomycotina</taxon>
        <taxon>Dipodascomycetes</taxon>
        <taxon>Dipodascales</taxon>
        <taxon>Dipodascales incertae sedis</taxon>
        <taxon>Yarrowia</taxon>
    </lineage>
</organism>
<name>RRP36_YARLI</name>
<comment type="function">
    <text evidence="1">Component of the 90S pre-ribosome involved in the maturation of rRNAs. Required for early cleavages of the pre-RNAs in the 40S ribosomal subunit maturation pathway (By similarity).</text>
</comment>
<comment type="subunit">
    <text evidence="1">Associates with 90S and pre-40S pre-ribosomal particles.</text>
</comment>
<comment type="subcellular location">
    <subcellularLocation>
        <location evidence="1">Nucleus</location>
        <location evidence="1">Nucleolus</location>
    </subcellularLocation>
</comment>
<comment type="similarity">
    <text evidence="4">Belongs to the RRP36 family.</text>
</comment>
<reference key="1">
    <citation type="journal article" date="2004" name="Nature">
        <title>Genome evolution in yeasts.</title>
        <authorList>
            <person name="Dujon B."/>
            <person name="Sherman D."/>
            <person name="Fischer G."/>
            <person name="Durrens P."/>
            <person name="Casaregola S."/>
            <person name="Lafontaine I."/>
            <person name="de Montigny J."/>
            <person name="Marck C."/>
            <person name="Neuveglise C."/>
            <person name="Talla E."/>
            <person name="Goffard N."/>
            <person name="Frangeul L."/>
            <person name="Aigle M."/>
            <person name="Anthouard V."/>
            <person name="Babour A."/>
            <person name="Barbe V."/>
            <person name="Barnay S."/>
            <person name="Blanchin S."/>
            <person name="Beckerich J.-M."/>
            <person name="Beyne E."/>
            <person name="Bleykasten C."/>
            <person name="Boisrame A."/>
            <person name="Boyer J."/>
            <person name="Cattolico L."/>
            <person name="Confanioleri F."/>
            <person name="de Daruvar A."/>
            <person name="Despons L."/>
            <person name="Fabre E."/>
            <person name="Fairhead C."/>
            <person name="Ferry-Dumazet H."/>
            <person name="Groppi A."/>
            <person name="Hantraye F."/>
            <person name="Hennequin C."/>
            <person name="Jauniaux N."/>
            <person name="Joyet P."/>
            <person name="Kachouri R."/>
            <person name="Kerrest A."/>
            <person name="Koszul R."/>
            <person name="Lemaire M."/>
            <person name="Lesur I."/>
            <person name="Ma L."/>
            <person name="Muller H."/>
            <person name="Nicaud J.-M."/>
            <person name="Nikolski M."/>
            <person name="Oztas S."/>
            <person name="Ozier-Kalogeropoulos O."/>
            <person name="Pellenz S."/>
            <person name="Potier S."/>
            <person name="Richard G.-F."/>
            <person name="Straub M.-L."/>
            <person name="Suleau A."/>
            <person name="Swennen D."/>
            <person name="Tekaia F."/>
            <person name="Wesolowski-Louvel M."/>
            <person name="Westhof E."/>
            <person name="Wirth B."/>
            <person name="Zeniou-Meyer M."/>
            <person name="Zivanovic Y."/>
            <person name="Bolotin-Fukuhara M."/>
            <person name="Thierry A."/>
            <person name="Bouchier C."/>
            <person name="Caudron B."/>
            <person name="Scarpelli C."/>
            <person name="Gaillardin C."/>
            <person name="Weissenbach J."/>
            <person name="Wincker P."/>
            <person name="Souciet J.-L."/>
        </authorList>
    </citation>
    <scope>NUCLEOTIDE SEQUENCE [LARGE SCALE GENOMIC DNA]</scope>
    <source>
        <strain>CLIB 122 / E 150</strain>
    </source>
</reference>
<keyword id="KW-0175">Coiled coil</keyword>
<keyword id="KW-0539">Nucleus</keyword>
<keyword id="KW-1185">Reference proteome</keyword>
<keyword id="KW-0687">Ribonucleoprotein</keyword>
<keyword id="KW-0690">Ribosome biogenesis</keyword>
<keyword id="KW-0698">rRNA processing</keyword>
<feature type="chain" id="PRO_0000397669" description="rRNA biogenesis protein RRP36">
    <location>
        <begin position="1"/>
        <end position="280"/>
    </location>
</feature>
<feature type="region of interest" description="Disordered" evidence="3">
    <location>
        <begin position="1"/>
        <end position="135"/>
    </location>
</feature>
<feature type="region of interest" description="Disordered" evidence="3">
    <location>
        <begin position="214"/>
        <end position="238"/>
    </location>
</feature>
<feature type="region of interest" description="Disordered" evidence="3">
    <location>
        <begin position="261"/>
        <end position="280"/>
    </location>
</feature>
<feature type="coiled-coil region" evidence="2">
    <location>
        <begin position="165"/>
        <end position="208"/>
    </location>
</feature>
<feature type="compositionally biased region" description="Basic and acidic residues" evidence="3">
    <location>
        <begin position="1"/>
        <end position="16"/>
    </location>
</feature>
<feature type="compositionally biased region" description="Acidic residues" evidence="3">
    <location>
        <begin position="55"/>
        <end position="68"/>
    </location>
</feature>
<feature type="compositionally biased region" description="Basic and acidic residues" evidence="3">
    <location>
        <begin position="268"/>
        <end position="280"/>
    </location>
</feature>